<accession>A5UII9</accession>
<proteinExistence type="inferred from homology"/>
<comment type="function">
    <text evidence="1">Involved in unsaturated fatty acids biosynthesis. Catalyzes the dehydration of short chain beta-hydroxyacyl-ACPs and long chain saturated and unsaturated beta-hydroxyacyl-ACPs.</text>
</comment>
<comment type="catalytic activity">
    <reaction evidence="1">
        <text>a (3R)-hydroxyacyl-[ACP] = a (2E)-enoyl-[ACP] + H2O</text>
        <dbReference type="Rhea" id="RHEA:13097"/>
        <dbReference type="Rhea" id="RHEA-COMP:9925"/>
        <dbReference type="Rhea" id="RHEA-COMP:9945"/>
        <dbReference type="ChEBI" id="CHEBI:15377"/>
        <dbReference type="ChEBI" id="CHEBI:78784"/>
        <dbReference type="ChEBI" id="CHEBI:78827"/>
        <dbReference type="EC" id="4.2.1.59"/>
    </reaction>
</comment>
<comment type="subcellular location">
    <subcellularLocation>
        <location evidence="1">Cytoplasm</location>
    </subcellularLocation>
</comment>
<comment type="similarity">
    <text evidence="1">Belongs to the thioester dehydratase family. FabZ subfamily.</text>
</comment>
<organism>
    <name type="scientific">Haemophilus influenzae (strain PittGG)</name>
    <dbReference type="NCBI Taxonomy" id="374931"/>
    <lineage>
        <taxon>Bacteria</taxon>
        <taxon>Pseudomonadati</taxon>
        <taxon>Pseudomonadota</taxon>
        <taxon>Gammaproteobacteria</taxon>
        <taxon>Pasteurellales</taxon>
        <taxon>Pasteurellaceae</taxon>
        <taxon>Haemophilus</taxon>
    </lineage>
</organism>
<protein>
    <recommendedName>
        <fullName evidence="1">3-hydroxyacyl-[acyl-carrier-protein] dehydratase FabZ</fullName>
        <ecNumber evidence="1">4.2.1.59</ecNumber>
    </recommendedName>
    <alternativeName>
        <fullName evidence="1">(3R)-hydroxymyristoyl-[acyl-carrier-protein] dehydratase</fullName>
        <shortName evidence="1">(3R)-hydroxymyristoyl-ACP dehydrase</shortName>
    </alternativeName>
    <alternativeName>
        <fullName evidence="1">Beta-hydroxyacyl-ACP dehydratase</fullName>
    </alternativeName>
</protein>
<name>FABZ_HAEIG</name>
<sequence>MSEQQPRVIESKEIMTLLPHRYPFLLVDRVLDFKEGEWLKAIKNISVNEPCFTGHFPGEPILPGVLILEALAQAMGILAFKTLELKGGELFYFAGIDEARFKRPVLPGDQMELNVQVIKERRGITAFTGVATVNGEIACEAKLMCARR</sequence>
<feature type="chain" id="PRO_1000049847" description="3-hydroxyacyl-[acyl-carrier-protein] dehydratase FabZ">
    <location>
        <begin position="1"/>
        <end position="148"/>
    </location>
</feature>
<feature type="active site" evidence="1">
    <location>
        <position position="55"/>
    </location>
</feature>
<evidence type="ECO:0000255" key="1">
    <source>
        <dbReference type="HAMAP-Rule" id="MF_00406"/>
    </source>
</evidence>
<gene>
    <name evidence="1" type="primary">fabZ</name>
    <name type="ordered locus">CGSHiGG_08945</name>
</gene>
<reference key="1">
    <citation type="journal article" date="2007" name="Genome Biol.">
        <title>Characterization and modeling of the Haemophilus influenzae core and supragenomes based on the complete genomic sequences of Rd and 12 clinical nontypeable strains.</title>
        <authorList>
            <person name="Hogg J.S."/>
            <person name="Hu F.Z."/>
            <person name="Janto B."/>
            <person name="Boissy R."/>
            <person name="Hayes J."/>
            <person name="Keefe R."/>
            <person name="Post J.C."/>
            <person name="Ehrlich G.D."/>
        </authorList>
    </citation>
    <scope>NUCLEOTIDE SEQUENCE [LARGE SCALE GENOMIC DNA]</scope>
    <source>
        <strain>PittGG</strain>
    </source>
</reference>
<keyword id="KW-0963">Cytoplasm</keyword>
<keyword id="KW-0441">Lipid A biosynthesis</keyword>
<keyword id="KW-0444">Lipid biosynthesis</keyword>
<keyword id="KW-0443">Lipid metabolism</keyword>
<keyword id="KW-0456">Lyase</keyword>
<dbReference type="EC" id="4.2.1.59" evidence="1"/>
<dbReference type="EMBL" id="CP000672">
    <property type="protein sequence ID" value="ABR00595.1"/>
    <property type="molecule type" value="Genomic_DNA"/>
</dbReference>
<dbReference type="SMR" id="A5UII9"/>
<dbReference type="KEGG" id="hiq:CGSHiGG_08945"/>
<dbReference type="HOGENOM" id="CLU_078912_1_0_6"/>
<dbReference type="Proteomes" id="UP000001990">
    <property type="component" value="Chromosome"/>
</dbReference>
<dbReference type="GO" id="GO:0005737">
    <property type="term" value="C:cytoplasm"/>
    <property type="evidence" value="ECO:0007669"/>
    <property type="project" value="UniProtKB-SubCell"/>
</dbReference>
<dbReference type="GO" id="GO:0016020">
    <property type="term" value="C:membrane"/>
    <property type="evidence" value="ECO:0007669"/>
    <property type="project" value="GOC"/>
</dbReference>
<dbReference type="GO" id="GO:0019171">
    <property type="term" value="F:(3R)-hydroxyacyl-[acyl-carrier-protein] dehydratase activity"/>
    <property type="evidence" value="ECO:0007669"/>
    <property type="project" value="UniProtKB-EC"/>
</dbReference>
<dbReference type="GO" id="GO:0006633">
    <property type="term" value="P:fatty acid biosynthetic process"/>
    <property type="evidence" value="ECO:0007669"/>
    <property type="project" value="UniProtKB-UniRule"/>
</dbReference>
<dbReference type="GO" id="GO:0009245">
    <property type="term" value="P:lipid A biosynthetic process"/>
    <property type="evidence" value="ECO:0007669"/>
    <property type="project" value="UniProtKB-UniRule"/>
</dbReference>
<dbReference type="CDD" id="cd01288">
    <property type="entry name" value="FabZ"/>
    <property type="match status" value="1"/>
</dbReference>
<dbReference type="FunFam" id="3.10.129.10:FF:000001">
    <property type="entry name" value="3-hydroxyacyl-[acyl-carrier-protein] dehydratase FabZ"/>
    <property type="match status" value="1"/>
</dbReference>
<dbReference type="Gene3D" id="3.10.129.10">
    <property type="entry name" value="Hotdog Thioesterase"/>
    <property type="match status" value="1"/>
</dbReference>
<dbReference type="HAMAP" id="MF_00406">
    <property type="entry name" value="FabZ"/>
    <property type="match status" value="1"/>
</dbReference>
<dbReference type="InterPro" id="IPR013114">
    <property type="entry name" value="FabA_FabZ"/>
</dbReference>
<dbReference type="InterPro" id="IPR010084">
    <property type="entry name" value="FabZ"/>
</dbReference>
<dbReference type="InterPro" id="IPR029069">
    <property type="entry name" value="HotDog_dom_sf"/>
</dbReference>
<dbReference type="NCBIfam" id="TIGR01750">
    <property type="entry name" value="fabZ"/>
    <property type="match status" value="1"/>
</dbReference>
<dbReference type="NCBIfam" id="NF000582">
    <property type="entry name" value="PRK00006.1"/>
    <property type="match status" value="1"/>
</dbReference>
<dbReference type="PANTHER" id="PTHR30272">
    <property type="entry name" value="3-HYDROXYACYL-[ACYL-CARRIER-PROTEIN] DEHYDRATASE"/>
    <property type="match status" value="1"/>
</dbReference>
<dbReference type="PANTHER" id="PTHR30272:SF1">
    <property type="entry name" value="3-HYDROXYACYL-[ACYL-CARRIER-PROTEIN] DEHYDRATASE"/>
    <property type="match status" value="1"/>
</dbReference>
<dbReference type="Pfam" id="PF07977">
    <property type="entry name" value="FabA"/>
    <property type="match status" value="1"/>
</dbReference>
<dbReference type="SUPFAM" id="SSF54637">
    <property type="entry name" value="Thioesterase/thiol ester dehydrase-isomerase"/>
    <property type="match status" value="1"/>
</dbReference>